<organism>
    <name type="scientific">Methylibium petroleiphilum (strain ATCC BAA-1232 / LMG 22953 / PM1)</name>
    <dbReference type="NCBI Taxonomy" id="420662"/>
    <lineage>
        <taxon>Bacteria</taxon>
        <taxon>Pseudomonadati</taxon>
        <taxon>Pseudomonadota</taxon>
        <taxon>Betaproteobacteria</taxon>
        <taxon>Burkholderiales</taxon>
        <taxon>Sphaerotilaceae</taxon>
        <taxon>Methylibium</taxon>
    </lineage>
</organism>
<keyword id="KW-1185">Reference proteome</keyword>
<keyword id="KW-0678">Repressor</keyword>
<keyword id="KW-0687">Ribonucleoprotein</keyword>
<keyword id="KW-0689">Ribosomal protein</keyword>
<keyword id="KW-0694">RNA-binding</keyword>
<keyword id="KW-0699">rRNA-binding</keyword>
<keyword id="KW-0810">Translation regulation</keyword>
<keyword id="KW-0820">tRNA-binding</keyword>
<accession>A2SLG8</accession>
<sequence length="235" mass="24552">MAKLTKRQKALEGKVDSLKLYAIDDAFKIVRDCATAKFDESIDVSVQLGIDAKKSDQVVRGAVVLPNGTGKTKRVAVFAQGAKAEEAKAAGADVVGMEDLAEQVKAGNLNFDVVIASPDTMRIVGTLGQILGPRGLMPNPKVGTVTPDVATAVKNAKAGQVQFRVDKAGIIHTTLGRRSFDGDKLKGNLQALIEALNKAKPATSKGIYLRKVAVSSTMGVGVRVDVASINAAAQG</sequence>
<name>RL1_METPP</name>
<reference key="1">
    <citation type="journal article" date="2007" name="J. Bacteriol.">
        <title>Whole-genome analysis of the methyl tert-butyl ether-degrading beta-proteobacterium Methylibium petroleiphilum PM1.</title>
        <authorList>
            <person name="Kane S.R."/>
            <person name="Chakicherla A.Y."/>
            <person name="Chain P.S.G."/>
            <person name="Schmidt R."/>
            <person name="Shin M.W."/>
            <person name="Legler T.C."/>
            <person name="Scow K.M."/>
            <person name="Larimer F.W."/>
            <person name="Lucas S.M."/>
            <person name="Richardson P.M."/>
            <person name="Hristova K.R."/>
        </authorList>
    </citation>
    <scope>NUCLEOTIDE SEQUENCE [LARGE SCALE GENOMIC DNA]</scope>
    <source>
        <strain>ATCC BAA-1232 / LMG 22953 / PM1</strain>
    </source>
</reference>
<comment type="function">
    <text evidence="1">Binds directly to 23S rRNA. The L1 stalk is quite mobile in the ribosome, and is involved in E site tRNA release.</text>
</comment>
<comment type="function">
    <text evidence="1">Protein L1 is also a translational repressor protein, it controls the translation of the L11 operon by binding to its mRNA.</text>
</comment>
<comment type="subunit">
    <text evidence="1">Part of the 50S ribosomal subunit.</text>
</comment>
<comment type="similarity">
    <text evidence="1">Belongs to the universal ribosomal protein uL1 family.</text>
</comment>
<gene>
    <name evidence="1" type="primary">rplA</name>
    <name type="ordered locus">Mpe_A3454</name>
</gene>
<proteinExistence type="inferred from homology"/>
<protein>
    <recommendedName>
        <fullName evidence="1">Large ribosomal subunit protein uL1</fullName>
    </recommendedName>
    <alternativeName>
        <fullName evidence="2">50S ribosomal protein L1</fullName>
    </alternativeName>
</protein>
<feature type="chain" id="PRO_0000308046" description="Large ribosomal subunit protein uL1">
    <location>
        <begin position="1"/>
        <end position="235"/>
    </location>
</feature>
<evidence type="ECO:0000255" key="1">
    <source>
        <dbReference type="HAMAP-Rule" id="MF_01318"/>
    </source>
</evidence>
<evidence type="ECO:0000305" key="2"/>
<dbReference type="EMBL" id="CP000555">
    <property type="protein sequence ID" value="ABM96407.1"/>
    <property type="molecule type" value="Genomic_DNA"/>
</dbReference>
<dbReference type="RefSeq" id="WP_011831028.1">
    <property type="nucleotide sequence ID" value="NC_008825.1"/>
</dbReference>
<dbReference type="SMR" id="A2SLG8"/>
<dbReference type="STRING" id="420662.Mpe_A3454"/>
<dbReference type="KEGG" id="mpt:Mpe_A3454"/>
<dbReference type="eggNOG" id="COG0081">
    <property type="taxonomic scope" value="Bacteria"/>
</dbReference>
<dbReference type="HOGENOM" id="CLU_062853_0_0_4"/>
<dbReference type="Proteomes" id="UP000000366">
    <property type="component" value="Chromosome"/>
</dbReference>
<dbReference type="GO" id="GO:0022625">
    <property type="term" value="C:cytosolic large ribosomal subunit"/>
    <property type="evidence" value="ECO:0007669"/>
    <property type="project" value="TreeGrafter"/>
</dbReference>
<dbReference type="GO" id="GO:0019843">
    <property type="term" value="F:rRNA binding"/>
    <property type="evidence" value="ECO:0007669"/>
    <property type="project" value="UniProtKB-UniRule"/>
</dbReference>
<dbReference type="GO" id="GO:0003735">
    <property type="term" value="F:structural constituent of ribosome"/>
    <property type="evidence" value="ECO:0007669"/>
    <property type="project" value="InterPro"/>
</dbReference>
<dbReference type="GO" id="GO:0000049">
    <property type="term" value="F:tRNA binding"/>
    <property type="evidence" value="ECO:0007669"/>
    <property type="project" value="UniProtKB-KW"/>
</dbReference>
<dbReference type="GO" id="GO:0006417">
    <property type="term" value="P:regulation of translation"/>
    <property type="evidence" value="ECO:0007669"/>
    <property type="project" value="UniProtKB-KW"/>
</dbReference>
<dbReference type="GO" id="GO:0006412">
    <property type="term" value="P:translation"/>
    <property type="evidence" value="ECO:0007669"/>
    <property type="project" value="UniProtKB-UniRule"/>
</dbReference>
<dbReference type="CDD" id="cd00403">
    <property type="entry name" value="Ribosomal_L1"/>
    <property type="match status" value="1"/>
</dbReference>
<dbReference type="FunFam" id="3.40.50.790:FF:000001">
    <property type="entry name" value="50S ribosomal protein L1"/>
    <property type="match status" value="1"/>
</dbReference>
<dbReference type="Gene3D" id="3.30.190.20">
    <property type="match status" value="1"/>
</dbReference>
<dbReference type="Gene3D" id="3.40.50.790">
    <property type="match status" value="1"/>
</dbReference>
<dbReference type="HAMAP" id="MF_01318_B">
    <property type="entry name" value="Ribosomal_uL1_B"/>
    <property type="match status" value="1"/>
</dbReference>
<dbReference type="InterPro" id="IPR005878">
    <property type="entry name" value="Ribosom_uL1_bac-type"/>
</dbReference>
<dbReference type="InterPro" id="IPR002143">
    <property type="entry name" value="Ribosomal_uL1"/>
</dbReference>
<dbReference type="InterPro" id="IPR023674">
    <property type="entry name" value="Ribosomal_uL1-like"/>
</dbReference>
<dbReference type="InterPro" id="IPR028364">
    <property type="entry name" value="Ribosomal_uL1/biogenesis"/>
</dbReference>
<dbReference type="InterPro" id="IPR016095">
    <property type="entry name" value="Ribosomal_uL1_3-a/b-sand"/>
</dbReference>
<dbReference type="InterPro" id="IPR023673">
    <property type="entry name" value="Ribosomal_uL1_CS"/>
</dbReference>
<dbReference type="NCBIfam" id="TIGR01169">
    <property type="entry name" value="rplA_bact"/>
    <property type="match status" value="1"/>
</dbReference>
<dbReference type="PANTHER" id="PTHR36427">
    <property type="entry name" value="54S RIBOSOMAL PROTEIN L1, MITOCHONDRIAL"/>
    <property type="match status" value="1"/>
</dbReference>
<dbReference type="PANTHER" id="PTHR36427:SF3">
    <property type="entry name" value="LARGE RIBOSOMAL SUBUNIT PROTEIN UL1M"/>
    <property type="match status" value="1"/>
</dbReference>
<dbReference type="Pfam" id="PF00687">
    <property type="entry name" value="Ribosomal_L1"/>
    <property type="match status" value="1"/>
</dbReference>
<dbReference type="PIRSF" id="PIRSF002155">
    <property type="entry name" value="Ribosomal_L1"/>
    <property type="match status" value="1"/>
</dbReference>
<dbReference type="SUPFAM" id="SSF56808">
    <property type="entry name" value="Ribosomal protein L1"/>
    <property type="match status" value="1"/>
</dbReference>
<dbReference type="PROSITE" id="PS01199">
    <property type="entry name" value="RIBOSOMAL_L1"/>
    <property type="match status" value="1"/>
</dbReference>